<feature type="chain" id="PRO_1000074968" description="Elongation factor G">
    <location>
        <begin position="1"/>
        <end position="699"/>
    </location>
</feature>
<feature type="domain" description="tr-type G">
    <location>
        <begin position="8"/>
        <end position="283"/>
    </location>
</feature>
<feature type="binding site" evidence="1">
    <location>
        <begin position="17"/>
        <end position="24"/>
    </location>
    <ligand>
        <name>GTP</name>
        <dbReference type="ChEBI" id="CHEBI:37565"/>
    </ligand>
</feature>
<feature type="binding site" evidence="1">
    <location>
        <begin position="81"/>
        <end position="85"/>
    </location>
    <ligand>
        <name>GTP</name>
        <dbReference type="ChEBI" id="CHEBI:37565"/>
    </ligand>
</feature>
<feature type="binding site" evidence="1">
    <location>
        <begin position="135"/>
        <end position="138"/>
    </location>
    <ligand>
        <name>GTP</name>
        <dbReference type="ChEBI" id="CHEBI:37565"/>
    </ligand>
</feature>
<gene>
    <name evidence="1" type="primary">fusA</name>
    <name type="ordered locus">RrIowa_0215</name>
</gene>
<accession>B0BWA2</accession>
<name>EFG_RICRO</name>
<organism>
    <name type="scientific">Rickettsia rickettsii (strain Iowa)</name>
    <dbReference type="NCBI Taxonomy" id="452659"/>
    <lineage>
        <taxon>Bacteria</taxon>
        <taxon>Pseudomonadati</taxon>
        <taxon>Pseudomonadota</taxon>
        <taxon>Alphaproteobacteria</taxon>
        <taxon>Rickettsiales</taxon>
        <taxon>Rickettsiaceae</taxon>
        <taxon>Rickettsieae</taxon>
        <taxon>Rickettsia</taxon>
        <taxon>spotted fever group</taxon>
    </lineage>
</organism>
<keyword id="KW-0963">Cytoplasm</keyword>
<keyword id="KW-0251">Elongation factor</keyword>
<keyword id="KW-0342">GTP-binding</keyword>
<keyword id="KW-0547">Nucleotide-binding</keyword>
<keyword id="KW-0648">Protein biosynthesis</keyword>
<reference key="1">
    <citation type="journal article" date="2008" name="Infect. Immun.">
        <title>Genomic comparison of virulent Rickettsia rickettsii Sheila Smith and avirulent Rickettsia rickettsii Iowa.</title>
        <authorList>
            <person name="Ellison D.W."/>
            <person name="Clark T.R."/>
            <person name="Sturdevant D.E."/>
            <person name="Virtaneva K."/>
            <person name="Porcella S.F."/>
            <person name="Hackstadt T."/>
        </authorList>
    </citation>
    <scope>NUCLEOTIDE SEQUENCE [LARGE SCALE GENOMIC DNA]</scope>
    <source>
        <strain>Iowa</strain>
    </source>
</reference>
<protein>
    <recommendedName>
        <fullName evidence="1">Elongation factor G</fullName>
        <shortName evidence="1">EF-G</shortName>
    </recommendedName>
</protein>
<evidence type="ECO:0000255" key="1">
    <source>
        <dbReference type="HAMAP-Rule" id="MF_00054"/>
    </source>
</evidence>
<dbReference type="EMBL" id="CP000766">
    <property type="protein sequence ID" value="ABY72128.1"/>
    <property type="molecule type" value="Genomic_DNA"/>
</dbReference>
<dbReference type="RefSeq" id="WP_012150391.1">
    <property type="nucleotide sequence ID" value="NC_010263.3"/>
</dbReference>
<dbReference type="SMR" id="B0BWA2"/>
<dbReference type="GeneID" id="79936966"/>
<dbReference type="KEGG" id="rrj:RrIowa_0215"/>
<dbReference type="eggNOG" id="COG0480">
    <property type="taxonomic scope" value="Bacteria"/>
</dbReference>
<dbReference type="HOGENOM" id="CLU_002794_4_1_5"/>
<dbReference type="Proteomes" id="UP000000796">
    <property type="component" value="Chromosome"/>
</dbReference>
<dbReference type="GO" id="GO:0005737">
    <property type="term" value="C:cytoplasm"/>
    <property type="evidence" value="ECO:0007669"/>
    <property type="project" value="UniProtKB-SubCell"/>
</dbReference>
<dbReference type="GO" id="GO:0005525">
    <property type="term" value="F:GTP binding"/>
    <property type="evidence" value="ECO:0007669"/>
    <property type="project" value="UniProtKB-UniRule"/>
</dbReference>
<dbReference type="GO" id="GO:0003924">
    <property type="term" value="F:GTPase activity"/>
    <property type="evidence" value="ECO:0007669"/>
    <property type="project" value="InterPro"/>
</dbReference>
<dbReference type="GO" id="GO:0003746">
    <property type="term" value="F:translation elongation factor activity"/>
    <property type="evidence" value="ECO:0007669"/>
    <property type="project" value="UniProtKB-UniRule"/>
</dbReference>
<dbReference type="GO" id="GO:0032790">
    <property type="term" value="P:ribosome disassembly"/>
    <property type="evidence" value="ECO:0007669"/>
    <property type="project" value="TreeGrafter"/>
</dbReference>
<dbReference type="CDD" id="cd01886">
    <property type="entry name" value="EF-G"/>
    <property type="match status" value="1"/>
</dbReference>
<dbReference type="CDD" id="cd16262">
    <property type="entry name" value="EFG_III"/>
    <property type="match status" value="1"/>
</dbReference>
<dbReference type="CDD" id="cd01434">
    <property type="entry name" value="EFG_mtEFG1_IV"/>
    <property type="match status" value="1"/>
</dbReference>
<dbReference type="CDD" id="cd03713">
    <property type="entry name" value="EFG_mtEFG_C"/>
    <property type="match status" value="1"/>
</dbReference>
<dbReference type="CDD" id="cd04088">
    <property type="entry name" value="EFG_mtEFG_II"/>
    <property type="match status" value="1"/>
</dbReference>
<dbReference type="FunFam" id="2.40.30.10:FF:000006">
    <property type="entry name" value="Elongation factor G"/>
    <property type="match status" value="1"/>
</dbReference>
<dbReference type="FunFam" id="3.30.230.10:FF:000003">
    <property type="entry name" value="Elongation factor G"/>
    <property type="match status" value="1"/>
</dbReference>
<dbReference type="FunFam" id="3.30.70.240:FF:000001">
    <property type="entry name" value="Elongation factor G"/>
    <property type="match status" value="1"/>
</dbReference>
<dbReference type="FunFam" id="3.30.70.870:FF:000001">
    <property type="entry name" value="Elongation factor G"/>
    <property type="match status" value="1"/>
</dbReference>
<dbReference type="FunFam" id="3.40.50.300:FF:000029">
    <property type="entry name" value="Elongation factor G"/>
    <property type="match status" value="1"/>
</dbReference>
<dbReference type="Gene3D" id="3.30.230.10">
    <property type="match status" value="1"/>
</dbReference>
<dbReference type="Gene3D" id="3.30.70.240">
    <property type="match status" value="1"/>
</dbReference>
<dbReference type="Gene3D" id="3.30.70.870">
    <property type="entry name" value="Elongation Factor G (Translational Gtpase), domain 3"/>
    <property type="match status" value="1"/>
</dbReference>
<dbReference type="Gene3D" id="3.40.50.300">
    <property type="entry name" value="P-loop containing nucleotide triphosphate hydrolases"/>
    <property type="match status" value="1"/>
</dbReference>
<dbReference type="Gene3D" id="2.40.30.10">
    <property type="entry name" value="Translation factors"/>
    <property type="match status" value="1"/>
</dbReference>
<dbReference type="HAMAP" id="MF_00054_B">
    <property type="entry name" value="EF_G_EF_2_B"/>
    <property type="match status" value="1"/>
</dbReference>
<dbReference type="InterPro" id="IPR053905">
    <property type="entry name" value="EF-G-like_DII"/>
</dbReference>
<dbReference type="InterPro" id="IPR041095">
    <property type="entry name" value="EFG_II"/>
</dbReference>
<dbReference type="InterPro" id="IPR009022">
    <property type="entry name" value="EFG_III"/>
</dbReference>
<dbReference type="InterPro" id="IPR035647">
    <property type="entry name" value="EFG_III/V"/>
</dbReference>
<dbReference type="InterPro" id="IPR047872">
    <property type="entry name" value="EFG_IV"/>
</dbReference>
<dbReference type="InterPro" id="IPR035649">
    <property type="entry name" value="EFG_V"/>
</dbReference>
<dbReference type="InterPro" id="IPR000640">
    <property type="entry name" value="EFG_V-like"/>
</dbReference>
<dbReference type="InterPro" id="IPR031157">
    <property type="entry name" value="G_TR_CS"/>
</dbReference>
<dbReference type="InterPro" id="IPR027417">
    <property type="entry name" value="P-loop_NTPase"/>
</dbReference>
<dbReference type="InterPro" id="IPR020568">
    <property type="entry name" value="Ribosomal_Su5_D2-typ_SF"/>
</dbReference>
<dbReference type="InterPro" id="IPR014721">
    <property type="entry name" value="Ribsml_uS5_D2-typ_fold_subgr"/>
</dbReference>
<dbReference type="InterPro" id="IPR005225">
    <property type="entry name" value="Small_GTP-bd"/>
</dbReference>
<dbReference type="InterPro" id="IPR000795">
    <property type="entry name" value="T_Tr_GTP-bd_dom"/>
</dbReference>
<dbReference type="InterPro" id="IPR009000">
    <property type="entry name" value="Transl_B-barrel_sf"/>
</dbReference>
<dbReference type="InterPro" id="IPR004540">
    <property type="entry name" value="Transl_elong_EFG/EF2"/>
</dbReference>
<dbReference type="InterPro" id="IPR005517">
    <property type="entry name" value="Transl_elong_EFG/EF2_IV"/>
</dbReference>
<dbReference type="NCBIfam" id="TIGR00484">
    <property type="entry name" value="EF-G"/>
    <property type="match status" value="1"/>
</dbReference>
<dbReference type="NCBIfam" id="NF009381">
    <property type="entry name" value="PRK12740.1-5"/>
    <property type="match status" value="1"/>
</dbReference>
<dbReference type="NCBIfam" id="TIGR00231">
    <property type="entry name" value="small_GTP"/>
    <property type="match status" value="1"/>
</dbReference>
<dbReference type="PANTHER" id="PTHR43261:SF1">
    <property type="entry name" value="RIBOSOME-RELEASING FACTOR 2, MITOCHONDRIAL"/>
    <property type="match status" value="1"/>
</dbReference>
<dbReference type="PANTHER" id="PTHR43261">
    <property type="entry name" value="TRANSLATION ELONGATION FACTOR G-RELATED"/>
    <property type="match status" value="1"/>
</dbReference>
<dbReference type="Pfam" id="PF22042">
    <property type="entry name" value="EF-G_D2"/>
    <property type="match status" value="1"/>
</dbReference>
<dbReference type="Pfam" id="PF00679">
    <property type="entry name" value="EFG_C"/>
    <property type="match status" value="1"/>
</dbReference>
<dbReference type="Pfam" id="PF14492">
    <property type="entry name" value="EFG_III"/>
    <property type="match status" value="1"/>
</dbReference>
<dbReference type="Pfam" id="PF03764">
    <property type="entry name" value="EFG_IV"/>
    <property type="match status" value="1"/>
</dbReference>
<dbReference type="Pfam" id="PF00009">
    <property type="entry name" value="GTP_EFTU"/>
    <property type="match status" value="1"/>
</dbReference>
<dbReference type="PRINTS" id="PR00315">
    <property type="entry name" value="ELONGATNFCT"/>
</dbReference>
<dbReference type="SMART" id="SM00838">
    <property type="entry name" value="EFG_C"/>
    <property type="match status" value="1"/>
</dbReference>
<dbReference type="SMART" id="SM00889">
    <property type="entry name" value="EFG_IV"/>
    <property type="match status" value="1"/>
</dbReference>
<dbReference type="SUPFAM" id="SSF54980">
    <property type="entry name" value="EF-G C-terminal domain-like"/>
    <property type="match status" value="2"/>
</dbReference>
<dbReference type="SUPFAM" id="SSF52540">
    <property type="entry name" value="P-loop containing nucleoside triphosphate hydrolases"/>
    <property type="match status" value="1"/>
</dbReference>
<dbReference type="SUPFAM" id="SSF54211">
    <property type="entry name" value="Ribosomal protein S5 domain 2-like"/>
    <property type="match status" value="1"/>
</dbReference>
<dbReference type="SUPFAM" id="SSF50447">
    <property type="entry name" value="Translation proteins"/>
    <property type="match status" value="1"/>
</dbReference>
<dbReference type="PROSITE" id="PS00301">
    <property type="entry name" value="G_TR_1"/>
    <property type="match status" value="1"/>
</dbReference>
<dbReference type="PROSITE" id="PS51722">
    <property type="entry name" value="G_TR_2"/>
    <property type="match status" value="1"/>
</dbReference>
<sequence>MSKINKLEHIRNIGICAHIDAGKTTTTERILYYTGKSHKIGEVHEGGATMDWMEQEQERGITITSAATTCRWQDKIINIIDTPGHVDFTIEVERSLRVLDGAVAVFDGVAGVEPQSETVWRQADKYNVPRMCFVNKMDRMGADFYRCVEMLKDRLGAKPLVIQLPVGIEENFKGIIDLIKMKAVIWKDEALGAEYFEEDIPADMKDKAEEYRAKLLDMVVELDDHVMEKYLSGEEVTAEEIKRLIRKGTISAAFYPVLCGSAFKNKGVQPLLDAVVDFLPSPIDIGIVKGMEVSTGEETDFPISVTEPFAALAFKIMNDPFVGSLTFIRIYSGKITSGTTVINTVKNKREKIGRMLLMHANNREDVKEASAGDIVALAGLKDTTTGDTLSDIDQQVILERMEFPEPVIELAVEPKSTADQEKMGLALSRLAAEDPSFRVSTDYETGQTVIKGMGELHLEIIIDRMRREFKVEANIGAPQVAYRETITKVCEIDYTHKKQSGGAGQFARVKIIFEPLKEVKDLKDEDKNKNFVFESKIIGGAVPKEYIPGVEKGLNNIRETGVIAGYPMIDFKATLVDGAFHDVDSSVLAFEIAAKAAFREGMPKGNPKLLEPIMQVEVITPDEYMGDIIGDLNSRRGQIQSMDPRGNAQVVTANVPLAEMFGYVNTLRSLSQGRAQFSMIFSHYDQVPSQVADIIKAKK</sequence>
<proteinExistence type="inferred from homology"/>
<comment type="function">
    <text evidence="1">Catalyzes the GTP-dependent ribosomal translocation step during translation elongation. During this step, the ribosome changes from the pre-translocational (PRE) to the post-translocational (POST) state as the newly formed A-site-bound peptidyl-tRNA and P-site-bound deacylated tRNA move to the P and E sites, respectively. Catalyzes the coordinated movement of the two tRNA molecules, the mRNA and conformational changes in the ribosome.</text>
</comment>
<comment type="subcellular location">
    <subcellularLocation>
        <location evidence="1">Cytoplasm</location>
    </subcellularLocation>
</comment>
<comment type="similarity">
    <text evidence="1">Belongs to the TRAFAC class translation factor GTPase superfamily. Classic translation factor GTPase family. EF-G/EF-2 subfamily.</text>
</comment>